<proteinExistence type="evidence at protein level"/>
<feature type="signal peptide" evidence="1">
    <location>
        <begin position="1"/>
        <end position="22"/>
    </location>
</feature>
<feature type="chain" id="PRO_0000033184" description="Sclerostin domain-containing protein 1">
    <location>
        <begin position="23"/>
        <end position="206"/>
    </location>
</feature>
<feature type="domain" description="CTCK" evidence="2">
    <location>
        <begin position="75"/>
        <end position="170"/>
    </location>
</feature>
<feature type="region of interest" description="Disordered" evidence="3">
    <location>
        <begin position="40"/>
        <end position="68"/>
    </location>
</feature>
<feature type="region of interest" description="Disordered" evidence="3">
    <location>
        <begin position="176"/>
        <end position="206"/>
    </location>
</feature>
<feature type="compositionally biased region" description="Polar residues" evidence="3">
    <location>
        <begin position="43"/>
        <end position="54"/>
    </location>
</feature>
<feature type="compositionally biased region" description="Basic residues" evidence="3">
    <location>
        <begin position="188"/>
        <end position="206"/>
    </location>
</feature>
<feature type="glycosylation site" description="N-linked (GlcNAc...) asparagine" evidence="1">
    <location>
        <position position="47"/>
    </location>
</feature>
<feature type="glycosylation site" description="N-linked (GlcNAc...) asparagine" evidence="1">
    <location>
        <position position="173"/>
    </location>
</feature>
<feature type="disulfide bond" evidence="2">
    <location>
        <begin position="75"/>
        <end position="133"/>
    </location>
</feature>
<feature type="disulfide bond" evidence="2">
    <location>
        <begin position="89"/>
        <end position="147"/>
    </location>
</feature>
<feature type="disulfide bond" evidence="2">
    <location>
        <begin position="100"/>
        <end position="163"/>
    </location>
</feature>
<feature type="disulfide bond" evidence="2">
    <location>
        <begin position="104"/>
        <end position="165"/>
    </location>
</feature>
<dbReference type="EMBL" id="AY319926">
    <property type="protein sequence ID" value="AAQ57626.1"/>
    <property type="molecule type" value="mRNA"/>
</dbReference>
<dbReference type="RefSeq" id="NP_989704.1">
    <property type="nucleotide sequence ID" value="NM_204373.1"/>
</dbReference>
<dbReference type="RefSeq" id="XP_015136747.1">
    <property type="nucleotide sequence ID" value="XM_015281261.1"/>
</dbReference>
<dbReference type="SMR" id="Q6VYA3"/>
<dbReference type="ELM" id="Q6VYA3"/>
<dbReference type="FunCoup" id="Q6VYA3">
    <property type="interactions" value="4"/>
</dbReference>
<dbReference type="GlyCosmos" id="Q6VYA3">
    <property type="glycosylation" value="2 sites, No reported glycans"/>
</dbReference>
<dbReference type="GlyGen" id="Q6VYA3">
    <property type="glycosylation" value="2 sites"/>
</dbReference>
<dbReference type="PaxDb" id="9031-ENSGALP00000041999"/>
<dbReference type="GeneID" id="378800"/>
<dbReference type="KEGG" id="gga:378800"/>
<dbReference type="CTD" id="25928"/>
<dbReference type="VEuPathDB" id="HostDB:geneid_378800"/>
<dbReference type="eggNOG" id="ENOG502QV5G">
    <property type="taxonomic scope" value="Eukaryota"/>
</dbReference>
<dbReference type="HOGENOM" id="CLU_087969_0_0_1"/>
<dbReference type="InParanoid" id="Q6VYA3"/>
<dbReference type="OrthoDB" id="6624188at2759"/>
<dbReference type="PhylomeDB" id="Q6VYA3"/>
<dbReference type="TreeFam" id="TF353019"/>
<dbReference type="PRO" id="PR:Q6VYA3"/>
<dbReference type="Proteomes" id="UP000000539">
    <property type="component" value="Chromosome 2"/>
</dbReference>
<dbReference type="Bgee" id="ENSGALG00000036836">
    <property type="expression patterns" value="Expressed in ovary and 5 other cell types or tissues"/>
</dbReference>
<dbReference type="GO" id="GO:0005615">
    <property type="term" value="C:extracellular space"/>
    <property type="evidence" value="ECO:0000318"/>
    <property type="project" value="GO_Central"/>
</dbReference>
<dbReference type="GO" id="GO:0036122">
    <property type="term" value="F:BMP binding"/>
    <property type="evidence" value="ECO:0000318"/>
    <property type="project" value="GO_Central"/>
</dbReference>
<dbReference type="GO" id="GO:0030514">
    <property type="term" value="P:negative regulation of BMP signaling pathway"/>
    <property type="evidence" value="ECO:0000318"/>
    <property type="project" value="GO_Central"/>
</dbReference>
<dbReference type="GO" id="GO:0030178">
    <property type="term" value="P:negative regulation of Wnt signaling pathway"/>
    <property type="evidence" value="ECO:0000318"/>
    <property type="project" value="GO_Central"/>
</dbReference>
<dbReference type="GO" id="GO:0016055">
    <property type="term" value="P:Wnt signaling pathway"/>
    <property type="evidence" value="ECO:0007669"/>
    <property type="project" value="UniProtKB-KW"/>
</dbReference>
<dbReference type="FunFam" id="2.10.90.10:FF:000019">
    <property type="entry name" value="Sclerostin domain-containing protein 1"/>
    <property type="match status" value="1"/>
</dbReference>
<dbReference type="Gene3D" id="2.10.90.10">
    <property type="entry name" value="Cystine-knot cytokines"/>
    <property type="match status" value="1"/>
</dbReference>
<dbReference type="InterPro" id="IPR006207">
    <property type="entry name" value="Cys_knot_C"/>
</dbReference>
<dbReference type="InterPro" id="IPR029034">
    <property type="entry name" value="Cystine-knot_cytokine"/>
</dbReference>
<dbReference type="InterPro" id="IPR008835">
    <property type="entry name" value="Sclerostin/SOSTDC1"/>
</dbReference>
<dbReference type="PANTHER" id="PTHR14903:SF5">
    <property type="entry name" value="SCLEROSTIN DOMAIN-CONTAINING PROTEIN 1"/>
    <property type="match status" value="1"/>
</dbReference>
<dbReference type="PANTHER" id="PTHR14903">
    <property type="entry name" value="SCLEROSTIN-RELATED"/>
    <property type="match status" value="1"/>
</dbReference>
<dbReference type="Pfam" id="PF05463">
    <property type="entry name" value="Sclerostin"/>
    <property type="match status" value="1"/>
</dbReference>
<dbReference type="PROSITE" id="PS01225">
    <property type="entry name" value="CTCK_2"/>
    <property type="match status" value="1"/>
</dbReference>
<reference key="1">
    <citation type="journal article" date="2003" name="Development">
        <title>Wise, a context-dependent activator and inhibitor of Wnt signalling.</title>
        <authorList>
            <person name="Itasaki N."/>
            <person name="Jones C.M."/>
            <person name="Mercurio S."/>
            <person name="Rowe A."/>
            <person name="Domingos P.M."/>
            <person name="Smith J.C."/>
            <person name="Krumlauf R."/>
        </authorList>
    </citation>
    <scope>NUCLEOTIDE SEQUENCE [MRNA]</scope>
    <scope>FUNCTION</scope>
    <scope>INTERACTION WITH LRP6</scope>
    <scope>DEVELOPMENTAL STAGE</scope>
</reference>
<evidence type="ECO:0000255" key="1"/>
<evidence type="ECO:0000255" key="2">
    <source>
        <dbReference type="PROSITE-ProRule" id="PRU00039"/>
    </source>
</evidence>
<evidence type="ECO:0000256" key="3">
    <source>
        <dbReference type="SAM" id="MobiDB-lite"/>
    </source>
</evidence>
<evidence type="ECO:0000269" key="4">
    <source>
    </source>
</evidence>
<evidence type="ECO:0000305" key="5"/>
<comment type="function">
    <text evidence="4">Can activate or inhibit Wnt signaling in a context-dependent manner. Activates the canonical Wnt pathway whereby acts through Disheveled proteins and beta-catenin. Antagonises Wnt signaling through the canonical pathways presumably by blocking accessibility of certain WNTs to their receptors. Induces posterior neural markers via components of the canonical Wnt pathway.</text>
</comment>
<comment type="subunit">
    <text evidence="4">Interacts with LRP6.</text>
</comment>
<comment type="subcellular location">
    <subcellularLocation>
        <location>Secreted</location>
    </subcellularLocation>
</comment>
<comment type="developmental stage">
    <text evidence="4">Expression was first detected broadly at stage 9, and then localized in the posterior surface ectoderm overlying the presomitic mesoderm by stage 10-11 embryo.</text>
</comment>
<comment type="similarity">
    <text evidence="5">Belongs to the sclerostin family.</text>
</comment>
<protein>
    <recommendedName>
        <fullName>Sclerostin domain-containing protein 1</fullName>
    </recommendedName>
    <alternativeName>
        <fullName>Wnt-signaling modulator</fullName>
    </alternativeName>
</protein>
<keyword id="KW-1015">Disulfide bond</keyword>
<keyword id="KW-0325">Glycoprotein</keyword>
<keyword id="KW-1185">Reference proteome</keyword>
<keyword id="KW-0964">Secreted</keyword>
<keyword id="KW-0732">Signal</keyword>
<keyword id="KW-0879">Wnt signaling pathway</keyword>
<sequence length="206" mass="23144">MLLSAIHFYGLLLACTFTRSYSAFKNDATEILYSHVVKPAPASPSSNSTLNQARNGGRHYAGTGSDRNNRVQVGCRELRSTKYISDGQCTSINPLKELVCAGECLPLPLLPNWIGGGYGTKYWSRRSSQEWRCVNDKTRTQRIQLQCQDGSIRTYKITVVTACKCKRYTRQHNESSHNFEGTSQAKPVQHHKERKRASKSSKHSTS</sequence>
<name>SOSD1_CHICK</name>
<organism>
    <name type="scientific">Gallus gallus</name>
    <name type="common">Chicken</name>
    <dbReference type="NCBI Taxonomy" id="9031"/>
    <lineage>
        <taxon>Eukaryota</taxon>
        <taxon>Metazoa</taxon>
        <taxon>Chordata</taxon>
        <taxon>Craniata</taxon>
        <taxon>Vertebrata</taxon>
        <taxon>Euteleostomi</taxon>
        <taxon>Archelosauria</taxon>
        <taxon>Archosauria</taxon>
        <taxon>Dinosauria</taxon>
        <taxon>Saurischia</taxon>
        <taxon>Theropoda</taxon>
        <taxon>Coelurosauria</taxon>
        <taxon>Aves</taxon>
        <taxon>Neognathae</taxon>
        <taxon>Galloanserae</taxon>
        <taxon>Galliformes</taxon>
        <taxon>Phasianidae</taxon>
        <taxon>Phasianinae</taxon>
        <taxon>Gallus</taxon>
    </lineage>
</organism>
<accession>Q6VYA3</accession>
<gene>
    <name type="primary">SOSTDC1</name>
    <name type="synonym">WISE</name>
</gene>